<proteinExistence type="inferred from homology"/>
<protein>
    <recommendedName>
        <fullName evidence="1">Ribosomal RNA large subunit methyltransferase H</fullName>
        <ecNumber evidence="1">2.1.1.177</ecNumber>
    </recommendedName>
    <alternativeName>
        <fullName evidence="1">23S rRNA (pseudouridine1915-N3)-methyltransferase</fullName>
    </alternativeName>
    <alternativeName>
        <fullName evidence="1">23S rRNA m3Psi1915 methyltransferase</fullName>
    </alternativeName>
    <alternativeName>
        <fullName evidence="1">rRNA (pseudouridine-N3-)-methyltransferase RlmH</fullName>
    </alternativeName>
</protein>
<sequence>MKLQLVAVGTKMPDWVQTGFTEYLRRFPKDMPFELIEIPAGKRGKNADIKRILDKEGEQMLAAAGKNRIVTLDIPGKPWDTPQLAAELERWKLDGRDVSLLIGGPEGLSPACKAAAEQSWSLSALTLPHPLVRVLVAESLYRAWSITTNHPYHRE</sequence>
<organism>
    <name type="scientific">Escherichia coli (strain ATCC 8739 / DSM 1576 / NBRC 3972 / NCIMB 8545 / WDCM 00012 / Crooks)</name>
    <dbReference type="NCBI Taxonomy" id="481805"/>
    <lineage>
        <taxon>Bacteria</taxon>
        <taxon>Pseudomonadati</taxon>
        <taxon>Pseudomonadota</taxon>
        <taxon>Gammaproteobacteria</taxon>
        <taxon>Enterobacterales</taxon>
        <taxon>Enterobacteriaceae</taxon>
        <taxon>Escherichia</taxon>
    </lineage>
</organism>
<evidence type="ECO:0000255" key="1">
    <source>
        <dbReference type="HAMAP-Rule" id="MF_00658"/>
    </source>
</evidence>
<feature type="chain" id="PRO_1000082803" description="Ribosomal RNA large subunit methyltransferase H">
    <location>
        <begin position="1"/>
        <end position="155"/>
    </location>
</feature>
<feature type="binding site" evidence="1">
    <location>
        <position position="72"/>
    </location>
    <ligand>
        <name>S-adenosyl-L-methionine</name>
        <dbReference type="ChEBI" id="CHEBI:59789"/>
    </ligand>
</feature>
<feature type="binding site" evidence="1">
    <location>
        <position position="103"/>
    </location>
    <ligand>
        <name>S-adenosyl-L-methionine</name>
        <dbReference type="ChEBI" id="CHEBI:59789"/>
    </ligand>
</feature>
<feature type="binding site" evidence="1">
    <location>
        <begin position="122"/>
        <end position="127"/>
    </location>
    <ligand>
        <name>S-adenosyl-L-methionine</name>
        <dbReference type="ChEBI" id="CHEBI:59789"/>
    </ligand>
</feature>
<dbReference type="EC" id="2.1.1.177" evidence="1"/>
<dbReference type="EMBL" id="CP000946">
    <property type="protein sequence ID" value="ACA78634.1"/>
    <property type="molecule type" value="Genomic_DNA"/>
</dbReference>
<dbReference type="RefSeq" id="WP_000776104.1">
    <property type="nucleotide sequence ID" value="NZ_MTFT01000005.1"/>
</dbReference>
<dbReference type="SMR" id="B1IYH2"/>
<dbReference type="GeneID" id="93776846"/>
<dbReference type="KEGG" id="ecl:EcolC_3009"/>
<dbReference type="HOGENOM" id="CLU_100552_1_0_6"/>
<dbReference type="GO" id="GO:0005737">
    <property type="term" value="C:cytoplasm"/>
    <property type="evidence" value="ECO:0007669"/>
    <property type="project" value="UniProtKB-SubCell"/>
</dbReference>
<dbReference type="GO" id="GO:0070038">
    <property type="term" value="F:rRNA (pseudouridine-N3-)-methyltransferase activity"/>
    <property type="evidence" value="ECO:0007669"/>
    <property type="project" value="UniProtKB-UniRule"/>
</dbReference>
<dbReference type="CDD" id="cd18081">
    <property type="entry name" value="RlmH-like"/>
    <property type="match status" value="1"/>
</dbReference>
<dbReference type="FunFam" id="3.40.1280.10:FF:000004">
    <property type="entry name" value="Ribosomal RNA large subunit methyltransferase H"/>
    <property type="match status" value="1"/>
</dbReference>
<dbReference type="Gene3D" id="3.40.1280.10">
    <property type="match status" value="1"/>
</dbReference>
<dbReference type="HAMAP" id="MF_00658">
    <property type="entry name" value="23SrRNA_methyltr_H"/>
    <property type="match status" value="1"/>
</dbReference>
<dbReference type="InterPro" id="IPR029028">
    <property type="entry name" value="Alpha/beta_knot_MTases"/>
</dbReference>
<dbReference type="InterPro" id="IPR003742">
    <property type="entry name" value="RlmH-like"/>
</dbReference>
<dbReference type="InterPro" id="IPR029026">
    <property type="entry name" value="tRNA_m1G_MTases_N"/>
</dbReference>
<dbReference type="NCBIfam" id="NF000984">
    <property type="entry name" value="PRK00103.1-1"/>
    <property type="match status" value="1"/>
</dbReference>
<dbReference type="NCBIfam" id="NF000986">
    <property type="entry name" value="PRK00103.1-4"/>
    <property type="match status" value="1"/>
</dbReference>
<dbReference type="NCBIfam" id="TIGR00246">
    <property type="entry name" value="tRNA_RlmH_YbeA"/>
    <property type="match status" value="1"/>
</dbReference>
<dbReference type="PANTHER" id="PTHR33603">
    <property type="entry name" value="METHYLTRANSFERASE"/>
    <property type="match status" value="1"/>
</dbReference>
<dbReference type="PANTHER" id="PTHR33603:SF1">
    <property type="entry name" value="RIBOSOMAL RNA LARGE SUBUNIT METHYLTRANSFERASE H"/>
    <property type="match status" value="1"/>
</dbReference>
<dbReference type="Pfam" id="PF02590">
    <property type="entry name" value="SPOUT_MTase"/>
    <property type="match status" value="1"/>
</dbReference>
<dbReference type="PIRSF" id="PIRSF004505">
    <property type="entry name" value="MT_bac"/>
    <property type="match status" value="1"/>
</dbReference>
<dbReference type="SUPFAM" id="SSF75217">
    <property type="entry name" value="alpha/beta knot"/>
    <property type="match status" value="1"/>
</dbReference>
<accession>B1IYH2</accession>
<reference key="1">
    <citation type="submission" date="2008-02" db="EMBL/GenBank/DDBJ databases">
        <title>Complete sequence of Escherichia coli C str. ATCC 8739.</title>
        <authorList>
            <person name="Copeland A."/>
            <person name="Lucas S."/>
            <person name="Lapidus A."/>
            <person name="Glavina del Rio T."/>
            <person name="Dalin E."/>
            <person name="Tice H."/>
            <person name="Bruce D."/>
            <person name="Goodwin L."/>
            <person name="Pitluck S."/>
            <person name="Kiss H."/>
            <person name="Brettin T."/>
            <person name="Detter J.C."/>
            <person name="Han C."/>
            <person name="Kuske C.R."/>
            <person name="Schmutz J."/>
            <person name="Larimer F."/>
            <person name="Land M."/>
            <person name="Hauser L."/>
            <person name="Kyrpides N."/>
            <person name="Mikhailova N."/>
            <person name="Ingram L."/>
            <person name="Richardson P."/>
        </authorList>
    </citation>
    <scope>NUCLEOTIDE SEQUENCE [LARGE SCALE GENOMIC DNA]</scope>
    <source>
        <strain>ATCC 8739 / DSM 1576 / NBRC 3972 / NCIMB 8545 / WDCM 00012 / Crooks</strain>
    </source>
</reference>
<keyword id="KW-0963">Cytoplasm</keyword>
<keyword id="KW-0489">Methyltransferase</keyword>
<keyword id="KW-0698">rRNA processing</keyword>
<keyword id="KW-0949">S-adenosyl-L-methionine</keyword>
<keyword id="KW-0808">Transferase</keyword>
<name>RLMH_ECOLC</name>
<comment type="function">
    <text evidence="1">Specifically methylates the pseudouridine at position 1915 (m3Psi1915) in 23S rRNA.</text>
</comment>
<comment type="catalytic activity">
    <reaction evidence="1">
        <text>pseudouridine(1915) in 23S rRNA + S-adenosyl-L-methionine = N(3)-methylpseudouridine(1915) in 23S rRNA + S-adenosyl-L-homocysteine + H(+)</text>
        <dbReference type="Rhea" id="RHEA:42752"/>
        <dbReference type="Rhea" id="RHEA-COMP:10221"/>
        <dbReference type="Rhea" id="RHEA-COMP:10222"/>
        <dbReference type="ChEBI" id="CHEBI:15378"/>
        <dbReference type="ChEBI" id="CHEBI:57856"/>
        <dbReference type="ChEBI" id="CHEBI:59789"/>
        <dbReference type="ChEBI" id="CHEBI:65314"/>
        <dbReference type="ChEBI" id="CHEBI:74486"/>
        <dbReference type="EC" id="2.1.1.177"/>
    </reaction>
</comment>
<comment type="subunit">
    <text evidence="1">Homodimer.</text>
</comment>
<comment type="subcellular location">
    <subcellularLocation>
        <location evidence="1">Cytoplasm</location>
    </subcellularLocation>
</comment>
<comment type="similarity">
    <text evidence="1">Belongs to the RNA methyltransferase RlmH family.</text>
</comment>
<gene>
    <name evidence="1" type="primary">rlmH</name>
    <name type="ordered locus">EcolC_3009</name>
</gene>